<sequence length="568" mass="62032">MDQDAFILKEDSEVEREAPGGRESLSDVIGFLDAVLSSEPTDIGGDRSWLHNTINTPQGPGSAHRAKSEGEGEVSTPSTQDNRSGEESRVSGRTSKPEAEAHAGNLDKQNIHRAFGGRTGTNSVSQDLGDGGDSGILENPPNERGYPRSGIEDENREMAAHPDKRGEDQAEGLPEEVRGGTSLPDEGEGGASNNGRSMEPGSSHSARVTGVLVIPSPELEEAVLRRNKRRPTNSGSKPLTPATVPGTRSPPLNRYNSTGSPPGKPPSTQDEHINSGDTPAVRVKDRKPPIGTRSVSDCPANGRPIHPGLETDSTKKGIGENTSSMKEMATLLTSLGVIQSAQEFESSRDASYVFARRALKSANYAEMTFNVCGLILSAEKSSARKVDENKQLLKQIQESVESFRDIYKRFSEYQKEQNSLLMSNLSTLHIITDRGGKTDNTDSLTRSPSVFAKSKENKTKATRFDPSMETLEDMKYKPDLIREDEFRDEIRNPLYQERDTEPRASNASRLLPSKEKPTMHSLRLVIESSPLSRAEKAAYVKSLSKCKTDQEVKAVMELVEEDIESLTN</sequence>
<organism>
    <name type="scientific">Sendai virus (strain Fushimi)</name>
    <name type="common">SeV</name>
    <dbReference type="NCBI Taxonomy" id="11195"/>
    <lineage>
        <taxon>Viruses</taxon>
        <taxon>Riboviria</taxon>
        <taxon>Orthornavirae</taxon>
        <taxon>Negarnaviricota</taxon>
        <taxon>Haploviricotina</taxon>
        <taxon>Monjiviricetes</taxon>
        <taxon>Mononegavirales</taxon>
        <taxon>Paramyxoviridae</taxon>
        <taxon>Feraresvirinae</taxon>
        <taxon>Respirovirus</taxon>
        <taxon>Respirovirus muris</taxon>
    </lineage>
</organism>
<reference key="1">
    <citation type="journal article" date="1989" name="Nucleic Acids Res.">
        <title>Cloning and sequencing of the polymerase gene (P) of Sendai virus (strain Fushimi).</title>
        <authorList>
            <person name="Neubert W.J."/>
        </authorList>
    </citation>
    <scope>NUCLEOTIDE SEQUENCE [GENOMIC RNA]</scope>
</reference>
<organismHost>
    <name type="scientific">Cavia cutleri</name>
    <name type="common">Guinea pig</name>
    <dbReference type="NCBI Taxonomy" id="10144"/>
</organismHost>
<organismHost>
    <name type="scientific">Cricetidae sp.</name>
    <name type="common">Hamster</name>
    <dbReference type="NCBI Taxonomy" id="36483"/>
</organismHost>
<organismHost>
    <name type="scientific">Mus musculus</name>
    <name type="common">Mouse</name>
    <dbReference type="NCBI Taxonomy" id="10090"/>
</organismHost>
<organismHost>
    <name type="scientific">Rattus norvegicus</name>
    <name type="common">Rat</name>
    <dbReference type="NCBI Taxonomy" id="10116"/>
</organismHost>
<comment type="function">
    <text evidence="3 4">Essential cofactor of the RNA polymerase L that plays a central role in the transcription and replication by forming the polymerase complex with RNA polymerase L and recruiting L to the genomic N-RNA template for RNA synthesis. Also plays a central role in the encapsidation of nascent RNA chains by forming the encapsidation complex with the nucleocapsid protein N (N-P complex). Acts as a chaperone for newly synthesized free N protein, so-called N0, allowing encapsidation of nascent RNA chains during replication (By similarity). The nucleoprotein protein N prevents excessive phosphorylation of P, which leads to down-regulation of viral transcription/ replication. Participates, together with N, in the formation of viral factories (viroplasms), which are large inclusions in the host cytoplasm where replication takes place (By similarity). Recruits host PI4KB and remodel the host endoplasmic reticulum membrane to form viral replication factories (By similarity).</text>
</comment>
<comment type="subunit">
    <text evidence="2">Homotetramer. Interacts (via multimerization domain) with polymerase L; this interaction forms the polymerase complex. Interacts (via N-terminus) with N0; this interaction allows P to chaperon N0 before encapsidation and form the N-P complex. Interacts (via C-terminus) with N-RNA template; this interaction positions the polymerase on the template.</text>
</comment>
<comment type="subcellular location">
    <subcellularLocation>
        <location>Host cytoplasm</location>
    </subcellularLocation>
</comment>
<comment type="domain">
    <text evidence="2 3">The N-terminus consists of a long intrinsically disordered tail (By similarity). The central part contains the coiled-coil multimerization domain (PMD). Forms a four-stranded coiled coil structure. The C-terminus constitutes the alpha-helical domain that binds to the nucleocapsid (N-RNA complex) (By similarity).</text>
</comment>
<comment type="PTM">
    <text evidence="2">Phosphorylated by PKC/PRKCZ, and other unknown kinases. Phosphorylation is necessary for viral transcription and replication. The N-terminus contains the majority of phosphorylated sites. Ser-249 is the major site of phosphorylation, but is not necessary for most functions.</text>
</comment>
<comment type="RNA editing">
    <location>
        <position position="318"/>
    </location>
    <text>Partially edited. RNA editing at this position consists of an insertion of one or two guanine nucleotides. The sequence displayed here is the P protein, derived from the unedited RNA. The edited RNA gives rise to the V protein (+1G) (AC P69284), and the W protein (+2G) (AC P69285).</text>
</comment>
<comment type="miscellaneous">
    <text>The P/V/C gene has two overlapping open reading frames. One encodes the P/V/W proteins and the other the C/Y proteins.</text>
</comment>
<comment type="similarity">
    <text evidence="6">Belongs to the respirovirus P protein family.</text>
</comment>
<feature type="chain" id="PRO_0000142713" description="Phosphoprotein">
    <location>
        <begin position="1"/>
        <end position="568"/>
    </location>
</feature>
<feature type="region of interest" description="Disordered" evidence="5">
    <location>
        <begin position="1"/>
        <end position="23"/>
    </location>
</feature>
<feature type="region of interest" description="N0 binding" evidence="2">
    <location>
        <begin position="33"/>
        <end position="41"/>
    </location>
</feature>
<feature type="region of interest" description="Disordered" evidence="5">
    <location>
        <begin position="38"/>
        <end position="320"/>
    </location>
</feature>
<feature type="region of interest" description="Multimerization" evidence="3">
    <location>
        <begin position="344"/>
        <end position="411"/>
    </location>
</feature>
<feature type="region of interest" description="Bipartite nucleocapsid binding domain 1" evidence="1">
    <location>
        <begin position="345"/>
        <end position="412"/>
    </location>
</feature>
<feature type="region of interest" description="Multimerization" evidence="3">
    <location>
        <begin position="362"/>
        <end position="432"/>
    </location>
</feature>
<feature type="region of interest" description="L protein binding" evidence="2">
    <location>
        <begin position="412"/>
        <end position="445"/>
    </location>
</feature>
<feature type="region of interest" description="L protein binding" evidence="1">
    <location>
        <begin position="413"/>
        <end position="445"/>
    </location>
</feature>
<feature type="region of interest" description="Bipartite nucleocapsid binding domain 2" evidence="1">
    <location>
        <begin position="479"/>
        <end position="568"/>
    </location>
</feature>
<feature type="region of interest" description="Interaction with the nucleocapsid (N-RNA)" evidence="2">
    <location>
        <begin position="479"/>
        <end position="568"/>
    </location>
</feature>
<feature type="region of interest" description="Disordered" evidence="5">
    <location>
        <begin position="495"/>
        <end position="516"/>
    </location>
</feature>
<feature type="region of interest" description="Formation of N-RNA complex involved in transcription and replication" evidence="3">
    <location>
        <begin position="547"/>
        <end position="566"/>
    </location>
</feature>
<feature type="coiled-coil region" evidence="1">
    <location>
        <begin position="364"/>
        <end position="429"/>
    </location>
</feature>
<feature type="compositionally biased region" description="Basic and acidic residues" evidence="5">
    <location>
        <begin position="7"/>
        <end position="20"/>
    </location>
</feature>
<feature type="compositionally biased region" description="Polar residues" evidence="5">
    <location>
        <begin position="50"/>
        <end position="59"/>
    </location>
</feature>
<feature type="compositionally biased region" description="Basic and acidic residues" evidence="5">
    <location>
        <begin position="83"/>
        <end position="101"/>
    </location>
</feature>
<feature type="compositionally biased region" description="Basic and acidic residues" evidence="5">
    <location>
        <begin position="150"/>
        <end position="168"/>
    </location>
</feature>
<feature type="compositionally biased region" description="Polar residues" evidence="5">
    <location>
        <begin position="191"/>
        <end position="206"/>
    </location>
</feature>
<feature type="modified residue" description="Phosphoserine; by host" evidence="1">
    <location>
        <position position="68"/>
    </location>
</feature>
<feature type="modified residue" description="Phosphoserine; by host" evidence="1">
    <location>
        <position position="125"/>
    </location>
</feature>
<feature type="modified residue" description="Phosphoserine; by host" evidence="1">
    <location>
        <position position="192"/>
    </location>
</feature>
<feature type="modified residue" description="Phosphoserine; by host" evidence="1">
    <location>
        <position position="249"/>
    </location>
</feature>
<feature type="modified residue" description="Phosphoserine; by host" evidence="1">
    <location>
        <position position="257"/>
    </location>
</feature>
<feature type="modified residue" description="Phosphoserine; by host" evidence="1">
    <location>
        <position position="260"/>
    </location>
</feature>
<feature type="modified residue" description="Phosphoserine; by host" evidence="1">
    <location>
        <position position="447"/>
    </location>
</feature>
<feature type="modified residue" description="Phosphoserine; by host" evidence="1">
    <location>
        <position position="449"/>
    </location>
</feature>
<proteinExistence type="inferred from homology"/>
<dbReference type="EMBL" id="X17008">
    <property type="protein sequence ID" value="CAA34871.1"/>
    <property type="molecule type" value="Genomic_RNA"/>
</dbReference>
<dbReference type="PIR" id="S06922">
    <property type="entry name" value="RRNZSF"/>
</dbReference>
<dbReference type="BMRB" id="P14252"/>
<dbReference type="SMR" id="P14252"/>
<dbReference type="Proteomes" id="UP000006825">
    <property type="component" value="Genome"/>
</dbReference>
<dbReference type="GO" id="GO:0030430">
    <property type="term" value="C:host cell cytoplasm"/>
    <property type="evidence" value="ECO:0007669"/>
    <property type="project" value="UniProtKB-SubCell"/>
</dbReference>
<dbReference type="GO" id="GO:0003723">
    <property type="term" value="F:RNA binding"/>
    <property type="evidence" value="ECO:0007669"/>
    <property type="project" value="InterPro"/>
</dbReference>
<dbReference type="GO" id="GO:0003968">
    <property type="term" value="F:RNA-directed RNA polymerase activity"/>
    <property type="evidence" value="ECO:0007669"/>
    <property type="project" value="InterPro"/>
</dbReference>
<dbReference type="GO" id="GO:0006351">
    <property type="term" value="P:DNA-templated transcription"/>
    <property type="evidence" value="ECO:0007669"/>
    <property type="project" value="InterPro"/>
</dbReference>
<dbReference type="GO" id="GO:0039697">
    <property type="term" value="P:negative stranded viral RNA transcription"/>
    <property type="evidence" value="ECO:0000314"/>
    <property type="project" value="UniProtKB"/>
</dbReference>
<dbReference type="GO" id="GO:0019079">
    <property type="term" value="P:viral genome replication"/>
    <property type="evidence" value="ECO:0007669"/>
    <property type="project" value="InterPro"/>
</dbReference>
<dbReference type="CDD" id="cd21031">
    <property type="entry name" value="MEV_P-protein-C_like"/>
    <property type="match status" value="1"/>
</dbReference>
<dbReference type="Gene3D" id="1.10.287.340">
    <property type="match status" value="1"/>
</dbReference>
<dbReference type="Gene3D" id="1.10.8.10">
    <property type="entry name" value="DNA helicase RuvA subunit, C-terminal domain"/>
    <property type="match status" value="1"/>
</dbReference>
<dbReference type="Gene3D" id="1.10.287.320">
    <property type="entry name" value="Viral phosphoprotein oligmorisation site domain"/>
    <property type="match status" value="1"/>
</dbReference>
<dbReference type="InterPro" id="IPR002693">
    <property type="entry name" value="Paramyxo_PProtein_C"/>
</dbReference>
<dbReference type="InterPro" id="IPR043097">
    <property type="entry name" value="PProtein_oligomer_dom1"/>
</dbReference>
<dbReference type="InterPro" id="IPR016075">
    <property type="entry name" value="RNA_pol_Pprot-P_XD_paramyxovir"/>
</dbReference>
<dbReference type="Pfam" id="PF01806">
    <property type="entry name" value="Paramyxo_P"/>
    <property type="match status" value="1"/>
</dbReference>
<dbReference type="SUPFAM" id="SSF58034">
    <property type="entry name" value="Multimerization domain of the phosphoprotein from sendai virus"/>
    <property type="match status" value="1"/>
</dbReference>
<dbReference type="SUPFAM" id="SSF101089">
    <property type="entry name" value="Phosphoprotein XD domain"/>
    <property type="match status" value="1"/>
</dbReference>
<evidence type="ECO:0000250" key="1"/>
<evidence type="ECO:0000250" key="2">
    <source>
        <dbReference type="UniProtKB" id="P04859"/>
    </source>
</evidence>
<evidence type="ECO:0000250" key="3">
    <source>
        <dbReference type="UniProtKB" id="P06162"/>
    </source>
</evidence>
<evidence type="ECO:0000250" key="4">
    <source>
        <dbReference type="UniProtKB" id="Q77M42"/>
    </source>
</evidence>
<evidence type="ECO:0000256" key="5">
    <source>
        <dbReference type="SAM" id="MobiDB-lite"/>
    </source>
</evidence>
<evidence type="ECO:0000305" key="6"/>
<gene>
    <name type="primary">P/V/C</name>
</gene>
<protein>
    <recommendedName>
        <fullName>Phosphoprotein</fullName>
        <shortName>Protein P</shortName>
    </recommendedName>
</protein>
<accession>P14252</accession>
<keyword id="KW-0143">Chaperone</keyword>
<keyword id="KW-0175">Coiled coil</keyword>
<keyword id="KW-1035">Host cytoplasm</keyword>
<keyword id="KW-0597">Phosphoprotein</keyword>
<keyword id="KW-0691">RNA editing</keyword>
<keyword id="KW-0693">Viral RNA replication</keyword>
<name>PHOSP_SENDF</name>